<keyword id="KW-0067">ATP-binding</keyword>
<keyword id="KW-0997">Cell inner membrane</keyword>
<keyword id="KW-1003">Cell membrane</keyword>
<keyword id="KW-0963">Cytoplasm</keyword>
<keyword id="KW-0472">Membrane</keyword>
<keyword id="KW-0547">Nucleotide-binding</keyword>
<keyword id="KW-0653">Protein transport</keyword>
<keyword id="KW-1278">Translocase</keyword>
<keyword id="KW-0811">Translocation</keyword>
<keyword id="KW-0813">Transport</keyword>
<proteinExistence type="inferred from homology"/>
<evidence type="ECO:0000255" key="1">
    <source>
        <dbReference type="HAMAP-Rule" id="MF_01382"/>
    </source>
</evidence>
<accession>Q2GEH0</accession>
<dbReference type="EC" id="7.4.2.8" evidence="1"/>
<dbReference type="EMBL" id="CP000237">
    <property type="protein sequence ID" value="ABD46321.1"/>
    <property type="molecule type" value="Genomic_DNA"/>
</dbReference>
<dbReference type="RefSeq" id="WP_011451632.1">
    <property type="nucleotide sequence ID" value="NC_007798.1"/>
</dbReference>
<dbReference type="SMR" id="Q2GEH0"/>
<dbReference type="STRING" id="222891.NSE_0232"/>
<dbReference type="KEGG" id="nse:NSE_0232"/>
<dbReference type="eggNOG" id="COG0653">
    <property type="taxonomic scope" value="Bacteria"/>
</dbReference>
<dbReference type="HOGENOM" id="CLU_005314_3_0_5"/>
<dbReference type="OrthoDB" id="9805579at2"/>
<dbReference type="Proteomes" id="UP000001942">
    <property type="component" value="Chromosome"/>
</dbReference>
<dbReference type="GO" id="GO:0031522">
    <property type="term" value="C:cell envelope Sec protein transport complex"/>
    <property type="evidence" value="ECO:0007669"/>
    <property type="project" value="TreeGrafter"/>
</dbReference>
<dbReference type="GO" id="GO:0005829">
    <property type="term" value="C:cytosol"/>
    <property type="evidence" value="ECO:0007669"/>
    <property type="project" value="TreeGrafter"/>
</dbReference>
<dbReference type="GO" id="GO:0005886">
    <property type="term" value="C:plasma membrane"/>
    <property type="evidence" value="ECO:0007669"/>
    <property type="project" value="UniProtKB-SubCell"/>
</dbReference>
<dbReference type="GO" id="GO:0005524">
    <property type="term" value="F:ATP binding"/>
    <property type="evidence" value="ECO:0007669"/>
    <property type="project" value="UniProtKB-UniRule"/>
</dbReference>
<dbReference type="GO" id="GO:0008564">
    <property type="term" value="F:protein-exporting ATPase activity"/>
    <property type="evidence" value="ECO:0007669"/>
    <property type="project" value="UniProtKB-EC"/>
</dbReference>
<dbReference type="GO" id="GO:0065002">
    <property type="term" value="P:intracellular protein transmembrane transport"/>
    <property type="evidence" value="ECO:0007669"/>
    <property type="project" value="UniProtKB-UniRule"/>
</dbReference>
<dbReference type="GO" id="GO:0017038">
    <property type="term" value="P:protein import"/>
    <property type="evidence" value="ECO:0007669"/>
    <property type="project" value="InterPro"/>
</dbReference>
<dbReference type="GO" id="GO:0006605">
    <property type="term" value="P:protein targeting"/>
    <property type="evidence" value="ECO:0007669"/>
    <property type="project" value="UniProtKB-UniRule"/>
</dbReference>
<dbReference type="GO" id="GO:0043952">
    <property type="term" value="P:protein transport by the Sec complex"/>
    <property type="evidence" value="ECO:0007669"/>
    <property type="project" value="TreeGrafter"/>
</dbReference>
<dbReference type="CDD" id="cd17928">
    <property type="entry name" value="DEXDc_SecA"/>
    <property type="match status" value="1"/>
</dbReference>
<dbReference type="CDD" id="cd18803">
    <property type="entry name" value="SF2_C_secA"/>
    <property type="match status" value="1"/>
</dbReference>
<dbReference type="FunFam" id="3.40.50.300:FF:000113">
    <property type="entry name" value="Preprotein translocase subunit SecA"/>
    <property type="match status" value="1"/>
</dbReference>
<dbReference type="FunFam" id="3.90.1440.10:FF:000001">
    <property type="entry name" value="Preprotein translocase subunit SecA"/>
    <property type="match status" value="1"/>
</dbReference>
<dbReference type="Gene3D" id="1.10.3060.10">
    <property type="entry name" value="Helical scaffold and wing domains of SecA"/>
    <property type="match status" value="1"/>
</dbReference>
<dbReference type="Gene3D" id="3.40.50.300">
    <property type="entry name" value="P-loop containing nucleotide triphosphate hydrolases"/>
    <property type="match status" value="2"/>
</dbReference>
<dbReference type="Gene3D" id="3.90.1440.10">
    <property type="entry name" value="SecA, preprotein cross-linking domain"/>
    <property type="match status" value="1"/>
</dbReference>
<dbReference type="HAMAP" id="MF_01382">
    <property type="entry name" value="SecA"/>
    <property type="match status" value="1"/>
</dbReference>
<dbReference type="InterPro" id="IPR014001">
    <property type="entry name" value="Helicase_ATP-bd"/>
</dbReference>
<dbReference type="InterPro" id="IPR001650">
    <property type="entry name" value="Helicase_C-like"/>
</dbReference>
<dbReference type="InterPro" id="IPR027417">
    <property type="entry name" value="P-loop_NTPase"/>
</dbReference>
<dbReference type="InterPro" id="IPR000185">
    <property type="entry name" value="SecA"/>
</dbReference>
<dbReference type="InterPro" id="IPR020937">
    <property type="entry name" value="SecA_CS"/>
</dbReference>
<dbReference type="InterPro" id="IPR011115">
    <property type="entry name" value="SecA_DEAD"/>
</dbReference>
<dbReference type="InterPro" id="IPR014018">
    <property type="entry name" value="SecA_motor_DEAD"/>
</dbReference>
<dbReference type="InterPro" id="IPR011130">
    <property type="entry name" value="SecA_preprotein_X-link_dom"/>
</dbReference>
<dbReference type="InterPro" id="IPR044722">
    <property type="entry name" value="SecA_SF2_C"/>
</dbReference>
<dbReference type="InterPro" id="IPR011116">
    <property type="entry name" value="SecA_Wing/Scaffold"/>
</dbReference>
<dbReference type="InterPro" id="IPR036266">
    <property type="entry name" value="SecA_Wing/Scaffold_sf"/>
</dbReference>
<dbReference type="InterPro" id="IPR036670">
    <property type="entry name" value="SecA_X-link_sf"/>
</dbReference>
<dbReference type="NCBIfam" id="NF009538">
    <property type="entry name" value="PRK12904.1"/>
    <property type="match status" value="1"/>
</dbReference>
<dbReference type="NCBIfam" id="TIGR00963">
    <property type="entry name" value="secA"/>
    <property type="match status" value="1"/>
</dbReference>
<dbReference type="PANTHER" id="PTHR30612:SF0">
    <property type="entry name" value="CHLOROPLAST PROTEIN-TRANSPORTING ATPASE"/>
    <property type="match status" value="1"/>
</dbReference>
<dbReference type="PANTHER" id="PTHR30612">
    <property type="entry name" value="SECA INNER MEMBRANE COMPONENT OF SEC PROTEIN SECRETION SYSTEM"/>
    <property type="match status" value="1"/>
</dbReference>
<dbReference type="Pfam" id="PF21090">
    <property type="entry name" value="P-loop_SecA"/>
    <property type="match status" value="1"/>
</dbReference>
<dbReference type="Pfam" id="PF07517">
    <property type="entry name" value="SecA_DEAD"/>
    <property type="match status" value="1"/>
</dbReference>
<dbReference type="Pfam" id="PF01043">
    <property type="entry name" value="SecA_PP_bind"/>
    <property type="match status" value="1"/>
</dbReference>
<dbReference type="Pfam" id="PF07516">
    <property type="entry name" value="SecA_SW"/>
    <property type="match status" value="1"/>
</dbReference>
<dbReference type="PRINTS" id="PR00906">
    <property type="entry name" value="SECA"/>
</dbReference>
<dbReference type="SMART" id="SM00957">
    <property type="entry name" value="SecA_DEAD"/>
    <property type="match status" value="1"/>
</dbReference>
<dbReference type="SMART" id="SM00958">
    <property type="entry name" value="SecA_PP_bind"/>
    <property type="match status" value="1"/>
</dbReference>
<dbReference type="SUPFAM" id="SSF81886">
    <property type="entry name" value="Helical scaffold and wing domains of SecA"/>
    <property type="match status" value="1"/>
</dbReference>
<dbReference type="SUPFAM" id="SSF52540">
    <property type="entry name" value="P-loop containing nucleoside triphosphate hydrolases"/>
    <property type="match status" value="2"/>
</dbReference>
<dbReference type="SUPFAM" id="SSF81767">
    <property type="entry name" value="Pre-protein crosslinking domain of SecA"/>
    <property type="match status" value="1"/>
</dbReference>
<dbReference type="PROSITE" id="PS01312">
    <property type="entry name" value="SECA"/>
    <property type="match status" value="1"/>
</dbReference>
<dbReference type="PROSITE" id="PS51196">
    <property type="entry name" value="SECA_MOTOR_DEAD"/>
    <property type="match status" value="1"/>
</dbReference>
<reference key="1">
    <citation type="journal article" date="2006" name="PLoS Genet.">
        <title>Comparative genomics of emerging human ehrlichiosis agents.</title>
        <authorList>
            <person name="Dunning Hotopp J.C."/>
            <person name="Lin M."/>
            <person name="Madupu R."/>
            <person name="Crabtree J."/>
            <person name="Angiuoli S.V."/>
            <person name="Eisen J.A."/>
            <person name="Seshadri R."/>
            <person name="Ren Q."/>
            <person name="Wu M."/>
            <person name="Utterback T.R."/>
            <person name="Smith S."/>
            <person name="Lewis M."/>
            <person name="Khouri H."/>
            <person name="Zhang C."/>
            <person name="Niu H."/>
            <person name="Lin Q."/>
            <person name="Ohashi N."/>
            <person name="Zhi N."/>
            <person name="Nelson W.C."/>
            <person name="Brinkac L.M."/>
            <person name="Dodson R.J."/>
            <person name="Rosovitz M.J."/>
            <person name="Sundaram J.P."/>
            <person name="Daugherty S.C."/>
            <person name="Davidsen T."/>
            <person name="Durkin A.S."/>
            <person name="Gwinn M.L."/>
            <person name="Haft D.H."/>
            <person name="Selengut J.D."/>
            <person name="Sullivan S.A."/>
            <person name="Zafar N."/>
            <person name="Zhou L."/>
            <person name="Benahmed F."/>
            <person name="Forberger H."/>
            <person name="Halpin R."/>
            <person name="Mulligan S."/>
            <person name="Robinson J."/>
            <person name="White O."/>
            <person name="Rikihisa Y."/>
            <person name="Tettelin H."/>
        </authorList>
    </citation>
    <scope>NUCLEOTIDE SEQUENCE [LARGE SCALE GENOMIC DNA]</scope>
    <source>
        <strain>ATCC VR-367 / Miyayama</strain>
    </source>
</reference>
<protein>
    <recommendedName>
        <fullName evidence="1">Protein translocase subunit SecA</fullName>
        <ecNumber evidence="1">7.4.2.8</ecNumber>
    </recommendedName>
</protein>
<comment type="function">
    <text evidence="1">Part of the Sec protein translocase complex. Interacts with the SecYEG preprotein conducting channel. Has a central role in coupling the hydrolysis of ATP to the transfer of proteins into and across the cell membrane, serving both as a receptor for the preprotein-SecB complex and as an ATP-driven molecular motor driving the stepwise translocation of polypeptide chains across the membrane.</text>
</comment>
<comment type="catalytic activity">
    <reaction evidence="1">
        <text>ATP + H2O + cellular proteinSide 1 = ADP + phosphate + cellular proteinSide 2.</text>
        <dbReference type="EC" id="7.4.2.8"/>
    </reaction>
</comment>
<comment type="subunit">
    <text evidence="1">Monomer and homodimer. Part of the essential Sec protein translocation apparatus which comprises SecA, SecYEG and auxiliary proteins SecDF-YajC and YidC.</text>
</comment>
<comment type="subcellular location">
    <subcellularLocation>
        <location evidence="1">Cell inner membrane</location>
        <topology evidence="1">Peripheral membrane protein</topology>
        <orientation evidence="1">Cytoplasmic side</orientation>
    </subcellularLocation>
    <subcellularLocation>
        <location evidence="1">Cytoplasm</location>
    </subcellularLocation>
    <text evidence="1">Distribution is 50-50.</text>
</comment>
<comment type="similarity">
    <text evidence="1">Belongs to the SecA family.</text>
</comment>
<gene>
    <name evidence="1" type="primary">secA</name>
    <name type="ordered locus">NSE_0232</name>
</gene>
<organism>
    <name type="scientific">Neorickettsia sennetsu (strain ATCC VR-367 / Miyayama)</name>
    <name type="common">Ehrlichia sennetsu</name>
    <dbReference type="NCBI Taxonomy" id="222891"/>
    <lineage>
        <taxon>Bacteria</taxon>
        <taxon>Pseudomonadati</taxon>
        <taxon>Pseudomonadota</taxon>
        <taxon>Alphaproteobacteria</taxon>
        <taxon>Rickettsiales</taxon>
        <taxon>Anaplasmataceae</taxon>
        <taxon>Neorickettsia</taxon>
    </lineage>
</organism>
<feature type="chain" id="PRO_0000320865" description="Protein translocase subunit SecA">
    <location>
        <begin position="1"/>
        <end position="804"/>
    </location>
</feature>
<feature type="binding site" evidence="1">
    <location>
        <position position="87"/>
    </location>
    <ligand>
        <name>ATP</name>
        <dbReference type="ChEBI" id="CHEBI:30616"/>
    </ligand>
</feature>
<feature type="binding site" evidence="1">
    <location>
        <begin position="105"/>
        <end position="109"/>
    </location>
    <ligand>
        <name>ATP</name>
        <dbReference type="ChEBI" id="CHEBI:30616"/>
    </ligand>
</feature>
<feature type="binding site" evidence="1">
    <location>
        <position position="500"/>
    </location>
    <ligand>
        <name>ATP</name>
        <dbReference type="ChEBI" id="CHEBI:30616"/>
    </ligand>
</feature>
<sequence>MLDLVHKIFDSRNRKIKRKLKDGLEQVNSLETRIRDLSSDELRNKTSEFKERLFKQSASLDEILPEAYACVREASLRTLGMRHFDVQIMGGIVLHWGMISEMHTGEGKTLVATLAAYLNALSEKGVHVVTVNDYLARRDTEWMKQIYRHLGLQVSCITSDMRDPERAHAYKADITYATNNELGFDYLRDNMKFSKGEMVQRDLHYAIVDEVDSILIDEARTPLIISGVTDNASYLYASMNKLAEKLDSTLYIVDEKTRTVSLTEEGQEAIEKLLMAEKFIESGSSLYEPQNLQLVHCLNQSLKAINLFQKNKDYIVQDGQIVLIDEFTGRMMHGRRYSEGLHQALEAKENLKIQNENQTLASITFQNYFRMYGKLSGMTGTAATEREEFSTIYGLEVVQIPSHLPVRRVDHDDEIYASKKEKYEAILALAKECHEKLQPILIGTTSIENSEELSRELKKAKLKHSVLNAKQHAFEAEIIAQAGKPGAITIATNMAGRGTDIQLGGNINFNISANDEAEKEHAKNEEIVRKAGGLYVIGTERHESRRIDNQLRGRSGRQGDPGESKFFLSLDDDLLRVFGTSGIRNMLKKQLSNNGAIKHSYITRSLEKAQKKVESRNYEIRKNLIKFDDVINEQRKVIFSQRNNIMESGDIDLLPIVTEVNAKTLENARSKNFYDISTLIHSMQSIYNEDFKELHKTEDIDGFIDSKTKSIIAEKERAHVEFLLEIKKRIMIAILDQLWKEHLQFLENLRLSINLKAVAQKNPLIEFKHEAFQAFQRLSERWHENIIASFVRVKLVERMHMKVM</sequence>
<name>SECA_NEOSM</name>